<keyword id="KW-0143">Chaperone</keyword>
<keyword id="KW-0963">Cytoplasm</keyword>
<keyword id="KW-1015">Disulfide bond</keyword>
<keyword id="KW-0676">Redox-active center</keyword>
<keyword id="KW-0862">Zinc</keyword>
<evidence type="ECO:0000255" key="1">
    <source>
        <dbReference type="HAMAP-Rule" id="MF_00117"/>
    </source>
</evidence>
<comment type="function">
    <text evidence="1">Redox regulated molecular chaperone. Protects both thermally unfolding and oxidatively damaged proteins from irreversible aggregation. Plays an important role in the bacterial defense system toward oxidative stress.</text>
</comment>
<comment type="subcellular location">
    <subcellularLocation>
        <location evidence="1">Cytoplasm</location>
    </subcellularLocation>
</comment>
<comment type="PTM">
    <text evidence="1">Under oxidizing conditions two disulfide bonds are formed involving the reactive cysteines. Under reducing conditions zinc is bound to the reactive cysteines and the protein is inactive.</text>
</comment>
<comment type="similarity">
    <text evidence="1">Belongs to the HSP33 family.</text>
</comment>
<sequence length="299" mass="32719">MTDSLVRATAAKGGIRLVAVSTTESTKEAKERHSLSYLTSAIVGRAMSASLLLASSMKVNHGRVTLRISSNGPLKGLTIDAGRDGSVRGYVGDPSLELDLIKNKSNHYTFDFKKATGIGYLHVIRDDGKGEPHNSTVELINGGIGEDIASYLLHSEQTPSAVFVGERINQDGIVCSGGLLAQILPKAERDYSLIDLLEDRCKEINSFSELLNKKGNNLISLIEEIFPDLDQSPSDIISTSQEVRFKCRCSRERSLSALKILGKDELQKMIKEDGKAELTCQFCKNVYLVKEDELISLID</sequence>
<proteinExistence type="inferred from homology"/>
<protein>
    <recommendedName>
        <fullName evidence="1">33 kDa chaperonin</fullName>
    </recommendedName>
    <alternativeName>
        <fullName evidence="1">Heat shock protein 33 homolog</fullName>
        <shortName evidence="1">HSP33</shortName>
    </alternativeName>
</protein>
<dbReference type="EMBL" id="CP000553">
    <property type="protein sequence ID" value="ABM75280.1"/>
    <property type="molecule type" value="Genomic_DNA"/>
</dbReference>
<dbReference type="RefSeq" id="WP_011823436.1">
    <property type="nucleotide sequence ID" value="NC_008819.1"/>
</dbReference>
<dbReference type="SMR" id="A2C1C0"/>
<dbReference type="KEGG" id="pme:NATL1_07221"/>
<dbReference type="eggNOG" id="COG1281">
    <property type="taxonomic scope" value="Bacteria"/>
</dbReference>
<dbReference type="HOGENOM" id="CLU_054493_1_0_3"/>
<dbReference type="Proteomes" id="UP000002592">
    <property type="component" value="Chromosome"/>
</dbReference>
<dbReference type="GO" id="GO:0005737">
    <property type="term" value="C:cytoplasm"/>
    <property type="evidence" value="ECO:0007669"/>
    <property type="project" value="UniProtKB-SubCell"/>
</dbReference>
<dbReference type="GO" id="GO:0044183">
    <property type="term" value="F:protein folding chaperone"/>
    <property type="evidence" value="ECO:0007669"/>
    <property type="project" value="TreeGrafter"/>
</dbReference>
<dbReference type="GO" id="GO:0051082">
    <property type="term" value="F:unfolded protein binding"/>
    <property type="evidence" value="ECO:0007669"/>
    <property type="project" value="UniProtKB-UniRule"/>
</dbReference>
<dbReference type="GO" id="GO:0042026">
    <property type="term" value="P:protein refolding"/>
    <property type="evidence" value="ECO:0007669"/>
    <property type="project" value="TreeGrafter"/>
</dbReference>
<dbReference type="CDD" id="cd00498">
    <property type="entry name" value="Hsp33"/>
    <property type="match status" value="1"/>
</dbReference>
<dbReference type="Gene3D" id="3.55.30.10">
    <property type="entry name" value="Hsp33 domain"/>
    <property type="match status" value="1"/>
</dbReference>
<dbReference type="Gene3D" id="3.90.1280.10">
    <property type="entry name" value="HSP33 redox switch-like"/>
    <property type="match status" value="1"/>
</dbReference>
<dbReference type="HAMAP" id="MF_00117">
    <property type="entry name" value="HslO"/>
    <property type="match status" value="1"/>
</dbReference>
<dbReference type="InterPro" id="IPR000397">
    <property type="entry name" value="Heat_shock_Hsp33"/>
</dbReference>
<dbReference type="InterPro" id="IPR016154">
    <property type="entry name" value="Heat_shock_Hsp33_C"/>
</dbReference>
<dbReference type="InterPro" id="IPR016153">
    <property type="entry name" value="Heat_shock_Hsp33_N"/>
</dbReference>
<dbReference type="NCBIfam" id="NF001033">
    <property type="entry name" value="PRK00114.1"/>
    <property type="match status" value="1"/>
</dbReference>
<dbReference type="PANTHER" id="PTHR30111">
    <property type="entry name" value="33 KDA CHAPERONIN"/>
    <property type="match status" value="1"/>
</dbReference>
<dbReference type="PANTHER" id="PTHR30111:SF1">
    <property type="entry name" value="33 KDA CHAPERONIN"/>
    <property type="match status" value="1"/>
</dbReference>
<dbReference type="Pfam" id="PF01430">
    <property type="entry name" value="HSP33"/>
    <property type="match status" value="1"/>
</dbReference>
<dbReference type="PIRSF" id="PIRSF005261">
    <property type="entry name" value="Heat_shock_Hsp33"/>
    <property type="match status" value="1"/>
</dbReference>
<dbReference type="SUPFAM" id="SSF64397">
    <property type="entry name" value="Hsp33 domain"/>
    <property type="match status" value="1"/>
</dbReference>
<dbReference type="SUPFAM" id="SSF118352">
    <property type="entry name" value="HSP33 redox switch-like"/>
    <property type="match status" value="1"/>
</dbReference>
<reference key="1">
    <citation type="journal article" date="2007" name="PLoS Genet.">
        <title>Patterns and implications of gene gain and loss in the evolution of Prochlorococcus.</title>
        <authorList>
            <person name="Kettler G.C."/>
            <person name="Martiny A.C."/>
            <person name="Huang K."/>
            <person name="Zucker J."/>
            <person name="Coleman M.L."/>
            <person name="Rodrigue S."/>
            <person name="Chen F."/>
            <person name="Lapidus A."/>
            <person name="Ferriera S."/>
            <person name="Johnson J."/>
            <person name="Steglich C."/>
            <person name="Church G.M."/>
            <person name="Richardson P."/>
            <person name="Chisholm S.W."/>
        </authorList>
    </citation>
    <scope>NUCLEOTIDE SEQUENCE [LARGE SCALE GENOMIC DNA]</scope>
    <source>
        <strain>NATL1A</strain>
    </source>
</reference>
<gene>
    <name evidence="1" type="primary">hslO</name>
    <name type="ordered locus">NATL1_07221</name>
</gene>
<name>HSLO_PROM1</name>
<accession>A2C1C0</accession>
<organism>
    <name type="scientific">Prochlorococcus marinus (strain NATL1A)</name>
    <dbReference type="NCBI Taxonomy" id="167555"/>
    <lineage>
        <taxon>Bacteria</taxon>
        <taxon>Bacillati</taxon>
        <taxon>Cyanobacteriota</taxon>
        <taxon>Cyanophyceae</taxon>
        <taxon>Synechococcales</taxon>
        <taxon>Prochlorococcaceae</taxon>
        <taxon>Prochlorococcus</taxon>
    </lineage>
</organism>
<feature type="chain" id="PRO_1000015555" description="33 kDa chaperonin">
    <location>
        <begin position="1"/>
        <end position="299"/>
    </location>
</feature>
<feature type="disulfide bond" description="Redox-active" evidence="1">
    <location>
        <begin position="247"/>
        <end position="249"/>
    </location>
</feature>
<feature type="disulfide bond" description="Redox-active" evidence="1">
    <location>
        <begin position="280"/>
        <end position="283"/>
    </location>
</feature>